<feature type="initiator methionine" description="Removed" evidence="12">
    <location>
        <position position="1"/>
    </location>
</feature>
<feature type="chain" id="PRO_0000191268" description="Glutathione S-transferase LANCL1">
    <location>
        <begin position="2"/>
        <end position="399"/>
    </location>
</feature>
<feature type="binding site" evidence="6">
    <location>
        <position position="276"/>
    </location>
    <ligand>
        <name>Zn(2+)</name>
        <dbReference type="ChEBI" id="CHEBI:29105"/>
    </ligand>
</feature>
<feature type="binding site" evidence="6">
    <location>
        <position position="317"/>
    </location>
    <ligand>
        <name>glutathione</name>
        <dbReference type="ChEBI" id="CHEBI:57925"/>
    </ligand>
</feature>
<feature type="binding site" evidence="6">
    <location>
        <position position="322"/>
    </location>
    <ligand>
        <name>Zn(2+)</name>
        <dbReference type="ChEBI" id="CHEBI:29105"/>
    </ligand>
</feature>
<feature type="binding site" evidence="6">
    <location>
        <position position="323"/>
    </location>
    <ligand>
        <name>Zn(2+)</name>
        <dbReference type="ChEBI" id="CHEBI:29105"/>
    </ligand>
</feature>
<feature type="binding site" evidence="6">
    <location>
        <begin position="364"/>
        <end position="367"/>
    </location>
    <ligand>
        <name>glutathione</name>
        <dbReference type="ChEBI" id="CHEBI:57925"/>
    </ligand>
</feature>
<feature type="modified residue" description="N-acetylalanine" evidence="12">
    <location>
        <position position="2"/>
    </location>
</feature>
<feature type="modified residue" description="N6-acetyllysine" evidence="13">
    <location>
        <position position="142"/>
    </location>
</feature>
<feature type="mutagenesis site" description="Loss of glutathione binding." evidence="6">
    <original>R</original>
    <variation>A</variation>
    <location>
        <position position="4"/>
    </location>
</feature>
<feature type="mutagenesis site" description="Loss of glutathione binding." evidence="6">
    <original>K</original>
    <variation>A</variation>
    <location>
        <position position="317"/>
    </location>
</feature>
<feature type="mutagenesis site" description="Loss of glutathione binding." evidence="6">
    <original>C</original>
    <variation>A</variation>
    <location>
        <position position="322"/>
    </location>
</feature>
<feature type="mutagenesis site" description="Loss of glutathione binding." evidence="6">
    <original>R</original>
    <variation>A</variation>
    <variation>E</variation>
    <location>
        <position position="364"/>
    </location>
</feature>
<feature type="helix" evidence="14">
    <location>
        <begin position="2"/>
        <end position="4"/>
    </location>
</feature>
<feature type="helix" evidence="15">
    <location>
        <begin position="15"/>
        <end position="18"/>
    </location>
</feature>
<feature type="turn" evidence="15">
    <location>
        <begin position="19"/>
        <end position="21"/>
    </location>
</feature>
<feature type="helix" evidence="15">
    <location>
        <begin position="30"/>
        <end position="50"/>
    </location>
</feature>
<feature type="helix" evidence="15">
    <location>
        <begin position="51"/>
        <end position="53"/>
    </location>
</feature>
<feature type="turn" evidence="15">
    <location>
        <begin position="61"/>
        <end position="63"/>
    </location>
</feature>
<feature type="helix" evidence="15">
    <location>
        <begin position="65"/>
        <end position="79"/>
    </location>
</feature>
<feature type="helix" evidence="15">
    <location>
        <begin position="82"/>
        <end position="96"/>
    </location>
</feature>
<feature type="turn" evidence="15">
    <location>
        <begin position="106"/>
        <end position="108"/>
    </location>
</feature>
<feature type="helix" evidence="15">
    <location>
        <begin position="111"/>
        <end position="123"/>
    </location>
</feature>
<feature type="helix" evidence="15">
    <location>
        <begin position="127"/>
        <end position="139"/>
    </location>
</feature>
<feature type="turn" evidence="14">
    <location>
        <begin position="140"/>
        <end position="142"/>
    </location>
</feature>
<feature type="turn" evidence="15">
    <location>
        <begin position="151"/>
        <end position="153"/>
    </location>
</feature>
<feature type="helix" evidence="15">
    <location>
        <begin position="155"/>
        <end position="169"/>
    </location>
</feature>
<feature type="helix" evidence="15">
    <location>
        <begin position="176"/>
        <end position="196"/>
    </location>
</feature>
<feature type="turn" evidence="15">
    <location>
        <begin position="200"/>
        <end position="202"/>
    </location>
</feature>
<feature type="turn" evidence="15">
    <location>
        <begin position="217"/>
        <end position="219"/>
    </location>
</feature>
<feature type="helix" evidence="15">
    <location>
        <begin position="221"/>
        <end position="228"/>
    </location>
</feature>
<feature type="helix" evidence="15">
    <location>
        <begin position="231"/>
        <end position="233"/>
    </location>
</feature>
<feature type="helix" evidence="15">
    <location>
        <begin position="237"/>
        <end position="242"/>
    </location>
</feature>
<feature type="helix" evidence="15">
    <location>
        <begin position="244"/>
        <end position="252"/>
    </location>
</feature>
<feature type="strand" evidence="15">
    <location>
        <begin position="274"/>
        <end position="278"/>
    </location>
</feature>
<feature type="helix" evidence="15">
    <location>
        <begin position="279"/>
        <end position="293"/>
    </location>
</feature>
<feature type="helix" evidence="15">
    <location>
        <begin position="296"/>
        <end position="312"/>
    </location>
</feature>
<feature type="strand" evidence="15">
    <location>
        <begin position="321"/>
        <end position="324"/>
    </location>
</feature>
<feature type="helix" evidence="15">
    <location>
        <begin position="325"/>
        <end position="339"/>
    </location>
</feature>
<feature type="helix" evidence="15">
    <location>
        <begin position="342"/>
        <end position="355"/>
    </location>
</feature>
<feature type="turn" evidence="15">
    <location>
        <begin position="356"/>
        <end position="359"/>
    </location>
</feature>
<feature type="turn" evidence="15">
    <location>
        <begin position="372"/>
        <end position="374"/>
    </location>
</feature>
<feature type="helix" evidence="15">
    <location>
        <begin position="376"/>
        <end position="385"/>
    </location>
</feature>
<feature type="helix" evidence="15">
    <location>
        <begin position="389"/>
        <end position="391"/>
    </location>
</feature>
<feature type="turn" evidence="15">
    <location>
        <begin position="395"/>
        <end position="397"/>
    </location>
</feature>
<sequence length="399" mass="45283">MAQRAFPNPYADYNKSLAEGYFDAAGRLTPEFSQRLTNKIRELLQQMERGLKSADPRDGTGYTGWAGIAVLYLHLYDVFGDPAYLQLAHGYVKQSLNCLTKRSITFLCGDAGPLAVAAVLYHKMNNEKQAEDCITRLIHLNKIDPHAPNEMLYGRIGYIYALLFVNKNFGVEKIPQSHIQQICETILTSGENLARKRNFTAKSPLMYEWYQEYYVGAAHGLAGIYYYLMQPSLQVSQGKLHSLVKPSVDYVCQLKFPSGNYPPCIGDNRDLLVHWCHGAPGVIYMLIQAYKVFREEKYLCDAYQCADVIWQYGLLKKGYGLCHGSAGNAYAFLTLYNLTQDMKYLYRACKFAEWCLEYGEHGCRTPDTPFSLFEGMAGTIYFLADLLVPTKARFPAFEL</sequence>
<evidence type="ECO:0000250" key="1">
    <source>
        <dbReference type="UniProtKB" id="O89112"/>
    </source>
</evidence>
<evidence type="ECO:0000250" key="2">
    <source>
        <dbReference type="UniProtKB" id="Q9QX69"/>
    </source>
</evidence>
<evidence type="ECO:0000269" key="3">
    <source>
    </source>
</evidence>
<evidence type="ECO:0000269" key="4">
    <source>
    </source>
</evidence>
<evidence type="ECO:0000269" key="5">
    <source>
    </source>
</evidence>
<evidence type="ECO:0000269" key="6">
    <source>
    </source>
</evidence>
<evidence type="ECO:0000269" key="7">
    <source>
    </source>
</evidence>
<evidence type="ECO:0000303" key="8">
    <source>
    </source>
</evidence>
<evidence type="ECO:0000305" key="9"/>
<evidence type="ECO:0000305" key="10">
    <source>
    </source>
</evidence>
<evidence type="ECO:0000312" key="11">
    <source>
        <dbReference type="HGNC" id="HGNC:6508"/>
    </source>
</evidence>
<evidence type="ECO:0007744" key="12">
    <source>
    </source>
</evidence>
<evidence type="ECO:0007744" key="13">
    <source>
    </source>
</evidence>
<evidence type="ECO:0007829" key="14">
    <source>
        <dbReference type="PDB" id="8CZL"/>
    </source>
</evidence>
<evidence type="ECO:0007829" key="15">
    <source>
        <dbReference type="PDB" id="8D19"/>
    </source>
</evidence>
<dbReference type="EC" id="2.5.1.18" evidence="1"/>
<dbReference type="EMBL" id="Y11395">
    <property type="protein sequence ID" value="CAA72205.1"/>
    <property type="molecule type" value="mRNA"/>
</dbReference>
<dbReference type="EMBL" id="AJ289236">
    <property type="protein sequence ID" value="CAC21950.1"/>
    <property type="molecule type" value="Genomic_DNA"/>
</dbReference>
<dbReference type="EMBL" id="AJ289237">
    <property type="protein sequence ID" value="CAC21950.1"/>
    <property type="status" value="JOINED"/>
    <property type="molecule type" value="Genomic_DNA"/>
</dbReference>
<dbReference type="EMBL" id="AJ289238">
    <property type="protein sequence ID" value="CAC21950.1"/>
    <property type="status" value="JOINED"/>
    <property type="molecule type" value="Genomic_DNA"/>
</dbReference>
<dbReference type="EMBL" id="AJ289239">
    <property type="protein sequence ID" value="CAC21950.1"/>
    <property type="status" value="JOINED"/>
    <property type="molecule type" value="Genomic_DNA"/>
</dbReference>
<dbReference type="EMBL" id="BC028685">
    <property type="protein sequence ID" value="AAH28685.1"/>
    <property type="molecule type" value="mRNA"/>
</dbReference>
<dbReference type="CCDS" id="CCDS2392.1"/>
<dbReference type="RefSeq" id="NP_001130046.1">
    <property type="nucleotide sequence ID" value="NM_001136574.2"/>
</dbReference>
<dbReference type="RefSeq" id="NP_001130047.1">
    <property type="nucleotide sequence ID" value="NM_001136575.2"/>
</dbReference>
<dbReference type="RefSeq" id="NP_006046.1">
    <property type="nucleotide sequence ID" value="NM_006055.3"/>
</dbReference>
<dbReference type="PDB" id="3E6U">
    <property type="method" value="X-ray"/>
    <property type="resolution" value="2.60 A"/>
    <property type="chains" value="A/B/C/D=1-399"/>
</dbReference>
<dbReference type="PDB" id="3E73">
    <property type="method" value="X-ray"/>
    <property type="resolution" value="2.80 A"/>
    <property type="chains" value="A/B=1-399"/>
</dbReference>
<dbReference type="PDB" id="8CZK">
    <property type="method" value="X-ray"/>
    <property type="resolution" value="1.91 A"/>
    <property type="chains" value="A/B=1-399"/>
</dbReference>
<dbReference type="PDB" id="8CZL">
    <property type="method" value="X-ray"/>
    <property type="resolution" value="1.58 A"/>
    <property type="chains" value="A/B=1-399"/>
</dbReference>
<dbReference type="PDB" id="8D0V">
    <property type="method" value="X-ray"/>
    <property type="resolution" value="1.79 A"/>
    <property type="chains" value="A/B=1-399"/>
</dbReference>
<dbReference type="PDB" id="8D19">
    <property type="method" value="X-ray"/>
    <property type="resolution" value="1.52 A"/>
    <property type="chains" value="A/B=1-399"/>
</dbReference>
<dbReference type="PDBsum" id="3E6U"/>
<dbReference type="PDBsum" id="3E73"/>
<dbReference type="PDBsum" id="8CZK"/>
<dbReference type="PDBsum" id="8CZL"/>
<dbReference type="PDBsum" id="8D0V"/>
<dbReference type="PDBsum" id="8D19"/>
<dbReference type="SMR" id="O43813"/>
<dbReference type="BioGRID" id="115599">
    <property type="interactions" value="107"/>
</dbReference>
<dbReference type="FunCoup" id="O43813">
    <property type="interactions" value="1174"/>
</dbReference>
<dbReference type="IntAct" id="O43813">
    <property type="interactions" value="50"/>
</dbReference>
<dbReference type="MINT" id="O43813"/>
<dbReference type="STRING" id="9606.ENSP00000388713"/>
<dbReference type="GlyCosmos" id="O43813">
    <property type="glycosylation" value="1 site, 1 glycan"/>
</dbReference>
<dbReference type="GlyGen" id="O43813">
    <property type="glycosylation" value="2 sites, 1 N-linked glycan (1 site), 1 O-linked glycan (1 site)"/>
</dbReference>
<dbReference type="iPTMnet" id="O43813"/>
<dbReference type="PhosphoSitePlus" id="O43813"/>
<dbReference type="SwissPalm" id="O43813"/>
<dbReference type="BioMuta" id="LANCL1"/>
<dbReference type="jPOST" id="O43813"/>
<dbReference type="MassIVE" id="O43813"/>
<dbReference type="PaxDb" id="9606-ENSP00000388713"/>
<dbReference type="PeptideAtlas" id="O43813"/>
<dbReference type="ProteomicsDB" id="49178"/>
<dbReference type="Pumba" id="O43813"/>
<dbReference type="Antibodypedia" id="34207">
    <property type="antibodies" value="114 antibodies from 21 providers"/>
</dbReference>
<dbReference type="DNASU" id="10314"/>
<dbReference type="Ensembl" id="ENST00000233714.8">
    <property type="protein sequence ID" value="ENSP00000233714.4"/>
    <property type="gene ID" value="ENSG00000115365.13"/>
</dbReference>
<dbReference type="Ensembl" id="ENST00000431941.6">
    <property type="protein sequence ID" value="ENSP00000397646.2"/>
    <property type="gene ID" value="ENSG00000115365.13"/>
</dbReference>
<dbReference type="Ensembl" id="ENST00000441020.7">
    <property type="protein sequence ID" value="ENSP00000393323.3"/>
    <property type="gene ID" value="ENSG00000115365.13"/>
</dbReference>
<dbReference type="Ensembl" id="ENST00000443314.5">
    <property type="protein sequence ID" value="ENSP00000388713.1"/>
    <property type="gene ID" value="ENSG00000115365.13"/>
</dbReference>
<dbReference type="Ensembl" id="ENST00000448951.6">
    <property type="protein sequence ID" value="ENSP00000396518.2"/>
    <property type="gene ID" value="ENSG00000115365.13"/>
</dbReference>
<dbReference type="Ensembl" id="ENST00000450366.7">
    <property type="protein sequence ID" value="ENSP00000393597.2"/>
    <property type="gene ID" value="ENSG00000115365.13"/>
</dbReference>
<dbReference type="GeneID" id="10314"/>
<dbReference type="KEGG" id="hsa:10314"/>
<dbReference type="MANE-Select" id="ENST00000450366.7">
    <property type="protein sequence ID" value="ENSP00000393597.2"/>
    <property type="RefSeq nucleotide sequence ID" value="NM_006055.3"/>
    <property type="RefSeq protein sequence ID" value="NP_006046.1"/>
</dbReference>
<dbReference type="AGR" id="HGNC:6508"/>
<dbReference type="CTD" id="10314"/>
<dbReference type="DisGeNET" id="10314"/>
<dbReference type="GeneCards" id="LANCL1"/>
<dbReference type="HGNC" id="HGNC:6508">
    <property type="gene designation" value="LANCL1"/>
</dbReference>
<dbReference type="HPA" id="ENSG00000115365">
    <property type="expression patterns" value="Tissue enhanced (brain)"/>
</dbReference>
<dbReference type="MIM" id="604155">
    <property type="type" value="gene"/>
</dbReference>
<dbReference type="neXtProt" id="NX_O43813"/>
<dbReference type="OpenTargets" id="ENSG00000115365"/>
<dbReference type="PharmGKB" id="PA30293"/>
<dbReference type="VEuPathDB" id="HostDB:ENSG00000115365"/>
<dbReference type="eggNOG" id="KOG2787">
    <property type="taxonomic scope" value="Eukaryota"/>
</dbReference>
<dbReference type="GeneTree" id="ENSGT00530000063186"/>
<dbReference type="HOGENOM" id="CLU_036244_0_0_1"/>
<dbReference type="InParanoid" id="O43813"/>
<dbReference type="OMA" id="PCVDDNR"/>
<dbReference type="OrthoDB" id="10257263at2759"/>
<dbReference type="PAN-GO" id="O43813">
    <property type="GO annotations" value="1 GO annotation based on evolutionary models"/>
</dbReference>
<dbReference type="PhylomeDB" id="O43813"/>
<dbReference type="TreeFam" id="TF300068"/>
<dbReference type="PathwayCommons" id="O43813"/>
<dbReference type="SignaLink" id="O43813"/>
<dbReference type="BioGRID-ORCS" id="10314">
    <property type="hits" value="11 hits in 1160 CRISPR screens"/>
</dbReference>
<dbReference type="CD-CODE" id="DEE660B4">
    <property type="entry name" value="Stress granule"/>
</dbReference>
<dbReference type="CD-CODE" id="FB4E32DD">
    <property type="entry name" value="Presynaptic clusters and postsynaptic densities"/>
</dbReference>
<dbReference type="ChiTaRS" id="LANCL1">
    <property type="organism name" value="human"/>
</dbReference>
<dbReference type="EvolutionaryTrace" id="O43813"/>
<dbReference type="GenomeRNAi" id="10314"/>
<dbReference type="Pharos" id="O43813">
    <property type="development level" value="Tbio"/>
</dbReference>
<dbReference type="PRO" id="PR:O43813"/>
<dbReference type="Proteomes" id="UP000005640">
    <property type="component" value="Chromosome 2"/>
</dbReference>
<dbReference type="RNAct" id="O43813">
    <property type="molecule type" value="protein"/>
</dbReference>
<dbReference type="Bgee" id="ENSG00000115365">
    <property type="expression patterns" value="Expressed in endothelial cell and 212 other cell types or tissues"/>
</dbReference>
<dbReference type="ExpressionAtlas" id="O43813">
    <property type="expression patterns" value="baseline and differential"/>
</dbReference>
<dbReference type="GO" id="GO:0005737">
    <property type="term" value="C:cytoplasm"/>
    <property type="evidence" value="ECO:0007669"/>
    <property type="project" value="UniProtKB-SubCell"/>
</dbReference>
<dbReference type="GO" id="GO:0005886">
    <property type="term" value="C:plasma membrane"/>
    <property type="evidence" value="ECO:0000304"/>
    <property type="project" value="ProtInc"/>
</dbReference>
<dbReference type="GO" id="GO:0004930">
    <property type="term" value="F:G protein-coupled receptor activity"/>
    <property type="evidence" value="ECO:0000304"/>
    <property type="project" value="ProtInc"/>
</dbReference>
<dbReference type="GO" id="GO:0043295">
    <property type="term" value="F:glutathione binding"/>
    <property type="evidence" value="ECO:0000314"/>
    <property type="project" value="UniProtKB"/>
</dbReference>
<dbReference type="GO" id="GO:0004364">
    <property type="term" value="F:glutathione transferase activity"/>
    <property type="evidence" value="ECO:0000250"/>
    <property type="project" value="UniProtKB"/>
</dbReference>
<dbReference type="GO" id="GO:0050750">
    <property type="term" value="F:low-density lipoprotein particle receptor binding"/>
    <property type="evidence" value="ECO:0000314"/>
    <property type="project" value="MGI"/>
</dbReference>
<dbReference type="GO" id="GO:0017124">
    <property type="term" value="F:SH3 domain binding"/>
    <property type="evidence" value="ECO:0000353"/>
    <property type="project" value="UniProtKB"/>
</dbReference>
<dbReference type="GO" id="GO:0008270">
    <property type="term" value="F:zinc ion binding"/>
    <property type="evidence" value="ECO:0000314"/>
    <property type="project" value="UniProtKB"/>
</dbReference>
<dbReference type="GO" id="GO:0005975">
    <property type="term" value="P:carbohydrate metabolic process"/>
    <property type="evidence" value="ECO:0007669"/>
    <property type="project" value="InterPro"/>
</dbReference>
<dbReference type="GO" id="GO:1990748">
    <property type="term" value="P:cellular detoxification"/>
    <property type="evidence" value="ECO:0000250"/>
    <property type="project" value="UniProtKB"/>
</dbReference>
<dbReference type="GO" id="GO:0007186">
    <property type="term" value="P:G protein-coupled receptor signaling pathway"/>
    <property type="evidence" value="ECO:0000304"/>
    <property type="project" value="ProtInc"/>
</dbReference>
<dbReference type="GO" id="GO:0031179">
    <property type="term" value="P:peptide modification"/>
    <property type="evidence" value="ECO:0007669"/>
    <property type="project" value="InterPro"/>
</dbReference>
<dbReference type="CDD" id="cd04794">
    <property type="entry name" value="euk_LANCL"/>
    <property type="match status" value="1"/>
</dbReference>
<dbReference type="FunFam" id="1.50.10.10:FF:000019">
    <property type="entry name" value="LanC-like protein 1"/>
    <property type="match status" value="1"/>
</dbReference>
<dbReference type="Gene3D" id="1.50.10.10">
    <property type="match status" value="1"/>
</dbReference>
<dbReference type="InterPro" id="IPR012341">
    <property type="entry name" value="6hp_glycosidase-like_sf"/>
</dbReference>
<dbReference type="InterPro" id="IPR007822">
    <property type="entry name" value="LANC-like"/>
</dbReference>
<dbReference type="InterPro" id="IPR020464">
    <property type="entry name" value="LanC-like_prot_euk"/>
</dbReference>
<dbReference type="PANTHER" id="PTHR12736:SF5">
    <property type="entry name" value="GLUTATHIONE S-TRANSFERASE LANCL1"/>
    <property type="match status" value="1"/>
</dbReference>
<dbReference type="PANTHER" id="PTHR12736">
    <property type="entry name" value="LANC-LIKE PROTEIN"/>
    <property type="match status" value="1"/>
</dbReference>
<dbReference type="Pfam" id="PF05147">
    <property type="entry name" value="LANC_like"/>
    <property type="match status" value="1"/>
</dbReference>
<dbReference type="PRINTS" id="PR01951">
    <property type="entry name" value="LANCEUKARYTE"/>
</dbReference>
<dbReference type="PRINTS" id="PR01950">
    <property type="entry name" value="LANCSUPER"/>
</dbReference>
<dbReference type="SMART" id="SM01260">
    <property type="entry name" value="LANC_like"/>
    <property type="match status" value="1"/>
</dbReference>
<dbReference type="SUPFAM" id="SSF158745">
    <property type="entry name" value="LanC-like"/>
    <property type="match status" value="1"/>
</dbReference>
<comment type="function">
    <text evidence="1 6">Functions as a glutathione transferase. Catalyzes conjugation of the glutathione (GSH) to artificial substrates 1-chloro-2,4-dinitrobenzene (CDNB) and p-nitrophenyl acetate. Mitigates neuronal oxidative stress during normal postnatal development and in response to oxidative stresses probably through GSH antioxidant defense mechanism (By similarity). May play a role in EPS8 signaling. Binds glutathione (PubMed:19528316).</text>
</comment>
<comment type="catalytic activity">
    <reaction evidence="1">
        <text>RX + glutathione = an S-substituted glutathione + a halide anion + H(+)</text>
        <dbReference type="Rhea" id="RHEA:16437"/>
        <dbReference type="ChEBI" id="CHEBI:15378"/>
        <dbReference type="ChEBI" id="CHEBI:16042"/>
        <dbReference type="ChEBI" id="CHEBI:17792"/>
        <dbReference type="ChEBI" id="CHEBI:57925"/>
        <dbReference type="ChEBI" id="CHEBI:90779"/>
        <dbReference type="EC" id="2.5.1.18"/>
    </reaction>
</comment>
<comment type="catalytic activity">
    <reaction evidence="1">
        <text>1-chloro-2,4-dinitrobenzene + glutathione = 2,4-dinitrophenyl-S-glutathione + chloride + H(+)</text>
        <dbReference type="Rhea" id="RHEA:51220"/>
        <dbReference type="ChEBI" id="CHEBI:15378"/>
        <dbReference type="ChEBI" id="CHEBI:17996"/>
        <dbReference type="ChEBI" id="CHEBI:34718"/>
        <dbReference type="ChEBI" id="CHEBI:57925"/>
        <dbReference type="ChEBI" id="CHEBI:133977"/>
        <dbReference type="EC" id="2.5.1.18"/>
    </reaction>
</comment>
<comment type="subunit">
    <text evidence="6 7">Interacts with the C-terminal of STOM (PubMed:9512664). Interacts with the EPS8 SH3 domain. Interaction with EPS8 is inhibited by glutathione binding (PubMed:19528316).</text>
</comment>
<comment type="subunit">
    <text evidence="4">(Microbial infection) Interacts with P.falciparum SBP1.</text>
</comment>
<comment type="interaction">
    <interactant intactId="EBI-3046631">
        <id>O43813</id>
    </interactant>
    <interactant intactId="EBI-2483278">
        <id>Q9UHR4</id>
        <label>BAIAP2L1</label>
    </interactant>
    <organismsDiffer>false</organismsDiffer>
    <experiments>3</experiments>
</comment>
<comment type="interaction">
    <interactant intactId="EBI-3046631">
        <id>O43813</id>
    </interactant>
    <interactant intactId="EBI-466029">
        <id>P42858</id>
        <label>HTT</label>
    </interactant>
    <organismsDiffer>false</organismsDiffer>
    <experiments>10</experiments>
</comment>
<comment type="interaction">
    <interactant intactId="EBI-3046631">
        <id>O43813</id>
    </interactant>
    <interactant intactId="EBI-375596">
        <id>Q08509</id>
        <label>Eps8</label>
    </interactant>
    <organismsDiffer>true</organismsDiffer>
    <experiments>2</experiments>
</comment>
<comment type="subcellular location">
    <subcellularLocation>
        <location evidence="4">Cytoplasm</location>
    </subcellularLocation>
    <subcellularLocation>
        <location evidence="3 5">Cell membrane</location>
        <topology evidence="3">Peripheral membrane protein</topology>
    </subcellularLocation>
</comment>
<comment type="tissue specificity">
    <text evidence="3 4 7">Detected in erythrocytes, brain, kidney, testis, ovary, heart, lung, placenta and spleen (at protein level). Ubiquitous. Strongly expressed in brain, spinal cord, pituitary gland, kidney, heart, skeletal muscle, pancreas, ovary and testis.</text>
</comment>
<comment type="miscellaneous">
    <text evidence="10">Was originally thought to be a G-protein coupled receptor.</text>
</comment>
<comment type="similarity">
    <text evidence="9">Belongs to the LanC-like protein family.</text>
</comment>
<name>LANC1_HUMAN</name>
<protein>
    <recommendedName>
        <fullName evidence="1">Glutathione S-transferase LANCL1</fullName>
        <ecNumber evidence="1">2.5.1.18</ecNumber>
    </recommendedName>
    <alternativeName>
        <fullName>40 kDa erythrocyte membrane protein</fullName>
        <shortName evidence="2">p40</shortName>
    </alternativeName>
    <alternativeName>
        <fullName evidence="8">LanC-like protein 1</fullName>
    </alternativeName>
</protein>
<reference key="1">
    <citation type="journal article" date="1998" name="Biochim. Biophys. Acta">
        <title>Isolation, molecular characterization, and tissue-specific expression of a novel putative G protein-coupled receptor.</title>
        <authorList>
            <person name="Mayer H."/>
            <person name="Salzer U."/>
            <person name="Breuss J."/>
            <person name="Ziegler S."/>
            <person name="Marchler-Bauer A."/>
            <person name="Prohaska R."/>
        </authorList>
    </citation>
    <scope>NUCLEOTIDE SEQUENCE [MRNA]</scope>
    <scope>PROTEIN SEQUENCE OF 5-24; 28-35; 40-50; 198-201 AND 392-399</scope>
    <scope>TISSUE SPECIFICITY</scope>
    <scope>INTERACTION WITH STOM</scope>
    <source>
        <tissue>Bone marrow</tissue>
        <tissue>Erythrocyte</tissue>
        <tissue>Fetal brain</tissue>
    </source>
</reference>
<reference key="2">
    <citation type="journal article" date="2001" name="Cytogenet. Cell Genet.">
        <title>Organization and chromosomal localization of the human and mouse genes coding for LanC-like protein 1 (LANCL1).</title>
        <authorList>
            <person name="Mayer H."/>
            <person name="Bauer H."/>
            <person name="Prohaska R."/>
        </authorList>
    </citation>
    <scope>NUCLEOTIDE SEQUENCE [GENOMIC DNA / MRNA]</scope>
    <source>
        <tissue>Brain</tissue>
        <tissue>Testis</tissue>
    </source>
</reference>
<reference key="3">
    <citation type="journal article" date="2004" name="Genome Res.">
        <title>The status, quality, and expansion of the NIH full-length cDNA project: the Mammalian Gene Collection (MGC).</title>
        <authorList>
            <consortium name="The MGC Project Team"/>
        </authorList>
    </citation>
    <scope>NUCLEOTIDE SEQUENCE [LARGE SCALE MRNA]</scope>
    <source>
        <tissue>Testis</tissue>
    </source>
</reference>
<reference key="4">
    <citation type="journal article" date="2000" name="Biochem. Biophys. Res. Commun.">
        <title>Characterization of p40/GPR69A as a peripheral membrane protein related to the lantibiotic synthetase component C.</title>
        <authorList>
            <person name="Bauer H."/>
            <person name="Mayer H."/>
            <person name="Marchler-Bauer A."/>
            <person name="Salzer U."/>
            <person name="Prohaska R."/>
        </authorList>
    </citation>
    <scope>SUBCELLULAR LOCATION</scope>
    <scope>TISSUE SPECIFICITY</scope>
</reference>
<reference key="5">
    <citation type="journal article" date="2005" name="Mol. Biochem. Parasitol.">
        <title>LANCL1, an erythrocyte protein recruited to the Maurer's clefts during Plasmodium falciparum development.</title>
        <authorList>
            <person name="Blisnick T."/>
            <person name="Vincensini L."/>
            <person name="Barale J.C."/>
            <person name="Namane A."/>
            <person name="Braun Breton C."/>
        </authorList>
    </citation>
    <scope>TISSUE SPECIFICITY</scope>
    <scope>INTERACTION WITH P.FALCIPARUM SBP1 (MICROBIAL INFECTION)</scope>
    <scope>IDENTIFICATION BY MASS SPECTROMETRY</scope>
    <scope>SUBCELLULAR LOCATION</scope>
</reference>
<reference key="6">
    <citation type="journal article" date="2006" name="Biochim. Biophys. Acta">
        <title>Myristoylation of human LanC-like protein 2 (LANCL2) is essential for the interaction with the plasma membrane and the increase in cellular sensitivity to adriamycin.</title>
        <authorList>
            <person name="Landlinger C."/>
            <person name="Salzer U."/>
            <person name="Prohaska R."/>
        </authorList>
    </citation>
    <scope>SUBCELLULAR LOCATION</scope>
</reference>
<reference key="7">
    <citation type="journal article" date="2009" name="Anal. Chem.">
        <title>Lys-N and trypsin cover complementary parts of the phosphoproteome in a refined SCX-based approach.</title>
        <authorList>
            <person name="Gauci S."/>
            <person name="Helbig A.O."/>
            <person name="Slijper M."/>
            <person name="Krijgsveld J."/>
            <person name="Heck A.J."/>
            <person name="Mohammed S."/>
        </authorList>
    </citation>
    <scope>ACETYLATION [LARGE SCALE ANALYSIS] AT ALA-2</scope>
    <scope>CLEAVAGE OF INITIATOR METHIONINE [LARGE SCALE ANALYSIS]</scope>
    <scope>IDENTIFICATION BY MASS SPECTROMETRY [LARGE SCALE ANALYSIS]</scope>
</reference>
<reference key="8">
    <citation type="journal article" date="2009" name="Science">
        <title>Lysine acetylation targets protein complexes and co-regulates major cellular functions.</title>
        <authorList>
            <person name="Choudhary C."/>
            <person name="Kumar C."/>
            <person name="Gnad F."/>
            <person name="Nielsen M.L."/>
            <person name="Rehman M."/>
            <person name="Walther T.C."/>
            <person name="Olsen J.V."/>
            <person name="Mann M."/>
        </authorList>
    </citation>
    <scope>ACETYLATION [LARGE SCALE ANALYSIS] AT LYS-142</scope>
    <scope>IDENTIFICATION BY MASS SPECTROMETRY [LARGE SCALE ANALYSIS]</scope>
</reference>
<reference key="9">
    <citation type="journal article" date="2011" name="BMC Syst. Biol.">
        <title>Initial characterization of the human central proteome.</title>
        <authorList>
            <person name="Burkard T.R."/>
            <person name="Planyavsky M."/>
            <person name="Kaupe I."/>
            <person name="Breitwieser F.P."/>
            <person name="Buerckstuemmer T."/>
            <person name="Bennett K.L."/>
            <person name="Superti-Furga G."/>
            <person name="Colinge J."/>
        </authorList>
    </citation>
    <scope>IDENTIFICATION BY MASS SPECTROMETRY [LARGE SCALE ANALYSIS]</scope>
</reference>
<reference key="10">
    <citation type="journal article" date="2009" name="Genes Dev.">
        <title>Structure of human lanthionine synthetase C-like protein 1 and its interaction with Eps8 and glutathione.</title>
        <authorList>
            <person name="Zhang W."/>
            <person name="Wang L."/>
            <person name="Liu Y."/>
            <person name="Xu J."/>
            <person name="Zhu G."/>
            <person name="Cang H."/>
            <person name="Li X."/>
            <person name="Bartlam M."/>
            <person name="Hensley K."/>
            <person name="Li G."/>
            <person name="Rao Z."/>
            <person name="Zhang X.C."/>
        </authorList>
    </citation>
    <scope>X-RAY CRYSTALLOGRAPHY (2.60 ANGSTROMS) IN COMPLEX WITH GLUTATHIONE AND ZINC IONS</scope>
    <scope>MUTAGENESIS OF ARG-4; LYS-317; CYS-322 AND ARG-364</scope>
    <scope>INTERACTION WITH EPS8</scope>
    <scope>FUNCTION</scope>
</reference>
<accession>O43813</accession>
<organism>
    <name type="scientific">Homo sapiens</name>
    <name type="common">Human</name>
    <dbReference type="NCBI Taxonomy" id="9606"/>
    <lineage>
        <taxon>Eukaryota</taxon>
        <taxon>Metazoa</taxon>
        <taxon>Chordata</taxon>
        <taxon>Craniata</taxon>
        <taxon>Vertebrata</taxon>
        <taxon>Euteleostomi</taxon>
        <taxon>Mammalia</taxon>
        <taxon>Eutheria</taxon>
        <taxon>Euarchontoglires</taxon>
        <taxon>Primates</taxon>
        <taxon>Haplorrhini</taxon>
        <taxon>Catarrhini</taxon>
        <taxon>Hominidae</taxon>
        <taxon>Homo</taxon>
    </lineage>
</organism>
<keyword id="KW-0002">3D-structure</keyword>
<keyword id="KW-0007">Acetylation</keyword>
<keyword id="KW-1003">Cell membrane</keyword>
<keyword id="KW-0963">Cytoplasm</keyword>
<keyword id="KW-0903">Direct protein sequencing</keyword>
<keyword id="KW-0472">Membrane</keyword>
<keyword id="KW-0479">Metal-binding</keyword>
<keyword id="KW-1267">Proteomics identification</keyword>
<keyword id="KW-1185">Reference proteome</keyword>
<keyword id="KW-0808">Transferase</keyword>
<keyword id="KW-0862">Zinc</keyword>
<gene>
    <name evidence="11" type="primary">LANCL1</name>
    <name evidence="2" type="synonym">GPR69A</name>
</gene>
<proteinExistence type="evidence at protein level"/>